<organism>
    <name type="scientific">Streptococcus pyogenes serotype M18 (strain MGAS8232)</name>
    <dbReference type="NCBI Taxonomy" id="186103"/>
    <lineage>
        <taxon>Bacteria</taxon>
        <taxon>Bacillati</taxon>
        <taxon>Bacillota</taxon>
        <taxon>Bacilli</taxon>
        <taxon>Lactobacillales</taxon>
        <taxon>Streptococcaceae</taxon>
        <taxon>Streptococcus</taxon>
    </lineage>
</organism>
<protein>
    <recommendedName>
        <fullName evidence="1">Holliday junction branch migration complex subunit RuvB</fullName>
        <ecNumber evidence="1">3.6.4.-</ecNumber>
    </recommendedName>
</protein>
<proteinExistence type="inferred from homology"/>
<reference key="1">
    <citation type="journal article" date="2002" name="Proc. Natl. Acad. Sci. U.S.A.">
        <title>Genome sequence and comparative microarray analysis of serotype M18 group A Streptococcus strains associated with acute rheumatic fever outbreaks.</title>
        <authorList>
            <person name="Smoot J.C."/>
            <person name="Barbian K.D."/>
            <person name="Van Gompel J.J."/>
            <person name="Smoot L.M."/>
            <person name="Chaussee M.S."/>
            <person name="Sylva G.L."/>
            <person name="Sturdevant D.E."/>
            <person name="Ricklefs S.M."/>
            <person name="Porcella S.F."/>
            <person name="Parkins L.D."/>
            <person name="Beres S.B."/>
            <person name="Campbell D.S."/>
            <person name="Smith T.M."/>
            <person name="Zhang Q."/>
            <person name="Kapur V."/>
            <person name="Daly J.A."/>
            <person name="Veasy L.G."/>
            <person name="Musser J.M."/>
        </authorList>
    </citation>
    <scope>NUCLEOTIDE SEQUENCE [LARGE SCALE GENOMIC DNA]</scope>
    <source>
        <strain>MGAS8232</strain>
    </source>
</reference>
<evidence type="ECO:0000255" key="1">
    <source>
        <dbReference type="HAMAP-Rule" id="MF_00016"/>
    </source>
</evidence>
<evidence type="ECO:0000305" key="2"/>
<feature type="chain" id="PRO_0000165612" description="Holliday junction branch migration complex subunit RuvB">
    <location>
        <begin position="1"/>
        <end position="332"/>
    </location>
</feature>
<feature type="region of interest" description="Large ATPase domain (RuvB-L)" evidence="1">
    <location>
        <begin position="1"/>
        <end position="181"/>
    </location>
</feature>
<feature type="region of interest" description="Small ATPAse domain (RuvB-S)" evidence="1">
    <location>
        <begin position="182"/>
        <end position="252"/>
    </location>
</feature>
<feature type="region of interest" description="Head domain (RuvB-H)" evidence="1">
    <location>
        <begin position="255"/>
        <end position="332"/>
    </location>
</feature>
<feature type="binding site" evidence="1">
    <location>
        <position position="20"/>
    </location>
    <ligand>
        <name>ATP</name>
        <dbReference type="ChEBI" id="CHEBI:30616"/>
    </ligand>
</feature>
<feature type="binding site" evidence="1">
    <location>
        <position position="21"/>
    </location>
    <ligand>
        <name>ATP</name>
        <dbReference type="ChEBI" id="CHEBI:30616"/>
    </ligand>
</feature>
<feature type="binding site" evidence="1">
    <location>
        <position position="62"/>
    </location>
    <ligand>
        <name>ATP</name>
        <dbReference type="ChEBI" id="CHEBI:30616"/>
    </ligand>
</feature>
<feature type="binding site" evidence="1">
    <location>
        <position position="65"/>
    </location>
    <ligand>
        <name>ATP</name>
        <dbReference type="ChEBI" id="CHEBI:30616"/>
    </ligand>
</feature>
<feature type="binding site" evidence="1">
    <location>
        <position position="66"/>
    </location>
    <ligand>
        <name>ATP</name>
        <dbReference type="ChEBI" id="CHEBI:30616"/>
    </ligand>
</feature>
<feature type="binding site" evidence="1">
    <location>
        <position position="66"/>
    </location>
    <ligand>
        <name>Mg(2+)</name>
        <dbReference type="ChEBI" id="CHEBI:18420"/>
    </ligand>
</feature>
<feature type="binding site" evidence="1">
    <location>
        <position position="67"/>
    </location>
    <ligand>
        <name>ATP</name>
        <dbReference type="ChEBI" id="CHEBI:30616"/>
    </ligand>
</feature>
<feature type="binding site" evidence="1">
    <location>
        <begin position="128"/>
        <end position="130"/>
    </location>
    <ligand>
        <name>ATP</name>
        <dbReference type="ChEBI" id="CHEBI:30616"/>
    </ligand>
</feature>
<feature type="binding site" evidence="1">
    <location>
        <position position="171"/>
    </location>
    <ligand>
        <name>ATP</name>
        <dbReference type="ChEBI" id="CHEBI:30616"/>
    </ligand>
</feature>
<feature type="binding site" evidence="1">
    <location>
        <position position="181"/>
    </location>
    <ligand>
        <name>ATP</name>
        <dbReference type="ChEBI" id="CHEBI:30616"/>
    </ligand>
</feature>
<feature type="binding site" evidence="1">
    <location>
        <position position="218"/>
    </location>
    <ligand>
        <name>ATP</name>
        <dbReference type="ChEBI" id="CHEBI:30616"/>
    </ligand>
</feature>
<feature type="binding site" evidence="1">
    <location>
        <position position="291"/>
    </location>
    <ligand>
        <name>DNA</name>
        <dbReference type="ChEBI" id="CHEBI:16991"/>
    </ligand>
</feature>
<feature type="binding site" evidence="1">
    <location>
        <position position="310"/>
    </location>
    <ligand>
        <name>DNA</name>
        <dbReference type="ChEBI" id="CHEBI:16991"/>
    </ligand>
</feature>
<feature type="binding site" evidence="1">
    <location>
        <position position="312"/>
    </location>
    <ligand>
        <name>DNA</name>
        <dbReference type="ChEBI" id="CHEBI:16991"/>
    </ligand>
</feature>
<feature type="binding site" evidence="1">
    <location>
        <position position="315"/>
    </location>
    <ligand>
        <name>DNA</name>
        <dbReference type="ChEBI" id="CHEBI:16991"/>
    </ligand>
</feature>
<accession>Q8P302</accession>
<sequence>MARILDNNVMGNEEFSDRTLRPQYLHEYIGQDKVKEQFAIFIEAAKRRDESLDHVLLFGPPGLGKTTMAFVIANELGVNLKQTSGPAVEKAGDLVAILNELEPGDILFIDEIHRMPMSVEEVLYSAMEDFYIDIMIGAGDTSRSIHLDLPPFTLIGATTRAGMLSNPLRARFGITGHMEYYQEKDLTEIVERTATIFEIKIDHEAARKLACRSRGTPRIANRLLKRVRDYAQIIGDGIITAQITDRALTMLDVDREGLNYIDQKILRTMIEMYQGGPVGLGTLSVNIAEERNTVEEMYEPYLIQKGFLMRTRTGRVATQKAYRHLGYPYQNT</sequence>
<comment type="function">
    <text evidence="1">The RuvA-RuvB-RuvC complex processes Holliday junction (HJ) DNA during genetic recombination and DNA repair, while the RuvA-RuvB complex plays an important role in the rescue of blocked DNA replication forks via replication fork reversal (RFR). RuvA specifically binds to HJ cruciform DNA, conferring on it an open structure. The RuvB hexamer acts as an ATP-dependent pump, pulling dsDNA into and through the RuvAB complex. RuvB forms 2 homohexamers on either side of HJ DNA bound by 1 or 2 RuvA tetramers; 4 subunits per hexamer contact DNA at a time. Coordinated motions by a converter formed by DNA-disengaged RuvB subunits stimulates ATP hydrolysis and nucleotide exchange. Immobilization of the converter enables RuvB to convert the ATP-contained energy into a lever motion, pulling 2 nucleotides of DNA out of the RuvA tetramer per ATP hydrolyzed, thus driving DNA branch migration. The RuvB motors rotate together with the DNA substrate, which together with the progressing nucleotide cycle form the mechanistic basis for DNA recombination by continuous HJ branch migration. Branch migration allows RuvC to scan DNA until it finds its consensus sequence, where it cleaves and resolves cruciform DNA.</text>
</comment>
<comment type="catalytic activity">
    <reaction evidence="1">
        <text>ATP + H2O = ADP + phosphate + H(+)</text>
        <dbReference type="Rhea" id="RHEA:13065"/>
        <dbReference type="ChEBI" id="CHEBI:15377"/>
        <dbReference type="ChEBI" id="CHEBI:15378"/>
        <dbReference type="ChEBI" id="CHEBI:30616"/>
        <dbReference type="ChEBI" id="CHEBI:43474"/>
        <dbReference type="ChEBI" id="CHEBI:456216"/>
    </reaction>
</comment>
<comment type="subunit">
    <text evidence="1">Homohexamer. Forms an RuvA(8)-RuvB(12)-Holliday junction (HJ) complex. HJ DNA is sandwiched between 2 RuvA tetramers; dsDNA enters through RuvA and exits via RuvB. An RuvB hexamer assembles on each DNA strand where it exits the tetramer. Each RuvB hexamer is contacted by two RuvA subunits (via domain III) on 2 adjacent RuvB subunits; this complex drives branch migration. In the full resolvosome a probable DNA-RuvA(4)-RuvB(12)-RuvC(2) complex forms which resolves the HJ.</text>
</comment>
<comment type="subcellular location">
    <subcellularLocation>
        <location evidence="1">Cytoplasm</location>
    </subcellularLocation>
</comment>
<comment type="domain">
    <text evidence="1">Has 3 domains, the large (RuvB-L) and small ATPase (RuvB-S) domains and the C-terminal head (RuvB-H) domain. The head domain binds DNA, while the ATPase domains jointly bind ATP, ADP or are empty depending on the state of the subunit in the translocation cycle. During a single DNA translocation step the structure of each domain remains the same, but their relative positions change.</text>
</comment>
<comment type="similarity">
    <text evidence="1">Belongs to the RuvB family.</text>
</comment>
<comment type="sequence caution" evidence="2">
    <conflict type="erroneous initiation">
        <sequence resource="EMBL-CDS" id="AAL96868"/>
    </conflict>
</comment>
<dbReference type="EC" id="3.6.4.-" evidence="1"/>
<dbReference type="EMBL" id="AE009949">
    <property type="protein sequence ID" value="AAL96868.1"/>
    <property type="status" value="ALT_INIT"/>
    <property type="molecule type" value="Genomic_DNA"/>
</dbReference>
<dbReference type="RefSeq" id="WP_023079556.1">
    <property type="nucleotide sequence ID" value="NC_003485.1"/>
</dbReference>
<dbReference type="SMR" id="Q8P302"/>
<dbReference type="KEGG" id="spm:spyM18_0039"/>
<dbReference type="HOGENOM" id="CLU_055599_1_0_9"/>
<dbReference type="GO" id="GO:0005737">
    <property type="term" value="C:cytoplasm"/>
    <property type="evidence" value="ECO:0007669"/>
    <property type="project" value="UniProtKB-SubCell"/>
</dbReference>
<dbReference type="GO" id="GO:0048476">
    <property type="term" value="C:Holliday junction resolvase complex"/>
    <property type="evidence" value="ECO:0007669"/>
    <property type="project" value="UniProtKB-UniRule"/>
</dbReference>
<dbReference type="GO" id="GO:0005524">
    <property type="term" value="F:ATP binding"/>
    <property type="evidence" value="ECO:0007669"/>
    <property type="project" value="UniProtKB-UniRule"/>
</dbReference>
<dbReference type="GO" id="GO:0016887">
    <property type="term" value="F:ATP hydrolysis activity"/>
    <property type="evidence" value="ECO:0007669"/>
    <property type="project" value="InterPro"/>
</dbReference>
<dbReference type="GO" id="GO:0000400">
    <property type="term" value="F:four-way junction DNA binding"/>
    <property type="evidence" value="ECO:0007669"/>
    <property type="project" value="UniProtKB-UniRule"/>
</dbReference>
<dbReference type="GO" id="GO:0009378">
    <property type="term" value="F:four-way junction helicase activity"/>
    <property type="evidence" value="ECO:0007669"/>
    <property type="project" value="InterPro"/>
</dbReference>
<dbReference type="GO" id="GO:0006310">
    <property type="term" value="P:DNA recombination"/>
    <property type="evidence" value="ECO:0007669"/>
    <property type="project" value="UniProtKB-UniRule"/>
</dbReference>
<dbReference type="GO" id="GO:0006281">
    <property type="term" value="P:DNA repair"/>
    <property type="evidence" value="ECO:0007669"/>
    <property type="project" value="UniProtKB-UniRule"/>
</dbReference>
<dbReference type="CDD" id="cd00009">
    <property type="entry name" value="AAA"/>
    <property type="match status" value="1"/>
</dbReference>
<dbReference type="Gene3D" id="1.10.8.60">
    <property type="match status" value="1"/>
</dbReference>
<dbReference type="Gene3D" id="3.40.50.300">
    <property type="entry name" value="P-loop containing nucleotide triphosphate hydrolases"/>
    <property type="match status" value="1"/>
</dbReference>
<dbReference type="Gene3D" id="1.10.10.10">
    <property type="entry name" value="Winged helix-like DNA-binding domain superfamily/Winged helix DNA-binding domain"/>
    <property type="match status" value="1"/>
</dbReference>
<dbReference type="HAMAP" id="MF_00016">
    <property type="entry name" value="DNA_HJ_migration_RuvB"/>
    <property type="match status" value="1"/>
</dbReference>
<dbReference type="InterPro" id="IPR003593">
    <property type="entry name" value="AAA+_ATPase"/>
</dbReference>
<dbReference type="InterPro" id="IPR041445">
    <property type="entry name" value="AAA_lid_4"/>
</dbReference>
<dbReference type="InterPro" id="IPR004605">
    <property type="entry name" value="DNA_helicase_Holl-junc_RuvB"/>
</dbReference>
<dbReference type="InterPro" id="IPR027417">
    <property type="entry name" value="P-loop_NTPase"/>
</dbReference>
<dbReference type="InterPro" id="IPR008824">
    <property type="entry name" value="RuvB-like_N"/>
</dbReference>
<dbReference type="InterPro" id="IPR008823">
    <property type="entry name" value="RuvB_C"/>
</dbReference>
<dbReference type="InterPro" id="IPR036388">
    <property type="entry name" value="WH-like_DNA-bd_sf"/>
</dbReference>
<dbReference type="InterPro" id="IPR036390">
    <property type="entry name" value="WH_DNA-bd_sf"/>
</dbReference>
<dbReference type="NCBIfam" id="NF000868">
    <property type="entry name" value="PRK00080.1"/>
    <property type="match status" value="1"/>
</dbReference>
<dbReference type="NCBIfam" id="TIGR00635">
    <property type="entry name" value="ruvB"/>
    <property type="match status" value="1"/>
</dbReference>
<dbReference type="PANTHER" id="PTHR42848">
    <property type="match status" value="1"/>
</dbReference>
<dbReference type="PANTHER" id="PTHR42848:SF1">
    <property type="entry name" value="HOLLIDAY JUNCTION BRANCH MIGRATION COMPLEX SUBUNIT RUVB"/>
    <property type="match status" value="1"/>
</dbReference>
<dbReference type="Pfam" id="PF17864">
    <property type="entry name" value="AAA_lid_4"/>
    <property type="match status" value="1"/>
</dbReference>
<dbReference type="Pfam" id="PF05491">
    <property type="entry name" value="RuvB_C"/>
    <property type="match status" value="1"/>
</dbReference>
<dbReference type="Pfam" id="PF05496">
    <property type="entry name" value="RuvB_N"/>
    <property type="match status" value="1"/>
</dbReference>
<dbReference type="SMART" id="SM00382">
    <property type="entry name" value="AAA"/>
    <property type="match status" value="1"/>
</dbReference>
<dbReference type="SUPFAM" id="SSF52540">
    <property type="entry name" value="P-loop containing nucleoside triphosphate hydrolases"/>
    <property type="match status" value="1"/>
</dbReference>
<dbReference type="SUPFAM" id="SSF46785">
    <property type="entry name" value="Winged helix' DNA-binding domain"/>
    <property type="match status" value="1"/>
</dbReference>
<name>RUVB_STRP8</name>
<gene>
    <name evidence="1" type="primary">ruvB</name>
    <name type="ordered locus">spyM18_0039</name>
</gene>
<keyword id="KW-0067">ATP-binding</keyword>
<keyword id="KW-0963">Cytoplasm</keyword>
<keyword id="KW-0227">DNA damage</keyword>
<keyword id="KW-0233">DNA recombination</keyword>
<keyword id="KW-0234">DNA repair</keyword>
<keyword id="KW-0238">DNA-binding</keyword>
<keyword id="KW-0378">Hydrolase</keyword>
<keyword id="KW-0547">Nucleotide-binding</keyword>